<gene>
    <name evidence="4" type="primary">ATP5IF1</name>
    <name type="synonym">ATPI</name>
    <name type="synonym">ATPIF1</name>
</gene>
<sequence length="108" mass="12184">MAATALAVRSRIGAWSVWAMQSRGFSSDTPEGVRSGAGAVRDAGGAFGKKEQADEERYFRARAREQLAALKKHHENEISHHVKEIERLQKEIERHKQSIKKLKNDDDD</sequence>
<name>ATIF1_PIG</name>
<keyword id="KW-0002">3D-structure</keyword>
<keyword id="KW-0175">Coiled coil</keyword>
<keyword id="KW-0496">Mitochondrion</keyword>
<keyword id="KW-1185">Reference proteome</keyword>
<keyword id="KW-0809">Transit peptide</keyword>
<accession>Q29307</accession>
<accession>A1XQV8</accession>
<comment type="function">
    <text evidence="2 3">Endogenous F(1)F(o)-ATPase inhibitor limiting ATP depletion when the mitochondrial membrane potential falls below a threshold and the F(1)F(o)-ATP synthase starts hydrolyzing ATP to pump protons out of the mitochondrial matrix. Required to avoid the consumption of cellular ATP when the F(1)F(o)-ATP synthase enzyme acts as an ATP hydrolase (By similarity). Indirectly acts as a regulator of heme synthesis in erythroid tissues: regulates heme synthesis by modulating the mitochondrial pH and redox potential, allowing FECH to efficiently catalyze the incorporation of iron into protoporphyrin IX to produce heme (By similarity).</text>
</comment>
<comment type="subunit">
    <text evidence="1">Homodimer; represents the active form and is present at a pH value below 6.5. Homotetramer; represents the inactive form and is present at a pH value above 7.0 (By similarity).</text>
</comment>
<comment type="subcellular location">
    <subcellularLocation>
        <location evidence="1">Mitochondrion</location>
    </subcellularLocation>
</comment>
<comment type="domain">
    <text evidence="1">Forms an alpha-helical dimer with monomers associated via an antiparallel alpha-helical coiled coil composed of residues 74-106, leaving each N-terminal inhibitory region (residues 26-52) accessible for interaction with an F1 catalytic domain. The inhibitory N-terminal region (residues 26-52) binds the alpha(ADP-bound)-beta(ADP-bound) (ATP5F1A-ATP5F1B) interface of F1-ATPase, and also contact the central gamma subunit (ATP5F1C). This dimeric state is favored by pH values below 7.0, and at higher values the dimers associate to form inactive homotetramer, where the inhibitory region is occluded, masking its inhibitory activity (By similarity).</text>
</comment>
<comment type="similarity">
    <text evidence="7">Belongs to the ATPase inhibitor family.</text>
</comment>
<dbReference type="EMBL" id="F14683">
    <property type="protein sequence ID" value="CAA23195.1"/>
    <property type="molecule type" value="mRNA"/>
</dbReference>
<dbReference type="EMBL" id="DQ629180">
    <property type="protein sequence ID" value="ABK55664.1"/>
    <property type="molecule type" value="mRNA"/>
</dbReference>
<dbReference type="RefSeq" id="NP_001090955.1">
    <property type="nucleotide sequence ID" value="NM_001097486.1"/>
</dbReference>
<dbReference type="PDB" id="6J5I">
    <property type="method" value="EM"/>
    <property type="resolution" value="3.34 A"/>
    <property type="chains" value="J=26-108"/>
</dbReference>
<dbReference type="PDB" id="6J5J">
    <property type="method" value="EM"/>
    <property type="resolution" value="3.45 A"/>
    <property type="chains" value="J=26-108"/>
</dbReference>
<dbReference type="PDB" id="6J5K">
    <property type="method" value="EM"/>
    <property type="resolution" value="6.20 A"/>
    <property type="chains" value="AJ/BJ/CJ/J=26-108"/>
</dbReference>
<dbReference type="PDBsum" id="6J5I"/>
<dbReference type="PDBsum" id="6J5J"/>
<dbReference type="PDBsum" id="6J5K"/>
<dbReference type="SMR" id="Q29307"/>
<dbReference type="FunCoup" id="Q29307">
    <property type="interactions" value="673"/>
</dbReference>
<dbReference type="IntAct" id="Q29307">
    <property type="interactions" value="1"/>
</dbReference>
<dbReference type="STRING" id="9823.ENSSSCP00000023669"/>
<dbReference type="PaxDb" id="9823-ENSSSCP00000023669"/>
<dbReference type="PeptideAtlas" id="Q29307"/>
<dbReference type="Ensembl" id="ENSSSCT00000029874.3">
    <property type="protein sequence ID" value="ENSSSCP00000023669.1"/>
    <property type="gene ID" value="ENSSSCG00000027072.4"/>
</dbReference>
<dbReference type="Ensembl" id="ENSSSCT00015096369.1">
    <property type="protein sequence ID" value="ENSSSCP00015039617.1"/>
    <property type="gene ID" value="ENSSSCG00015071631.1"/>
</dbReference>
<dbReference type="Ensembl" id="ENSSSCT00025037194.1">
    <property type="protein sequence ID" value="ENSSSCP00025015578.1"/>
    <property type="gene ID" value="ENSSSCG00025027404.1"/>
</dbReference>
<dbReference type="Ensembl" id="ENSSSCT00030063742.1">
    <property type="protein sequence ID" value="ENSSSCP00030029180.1"/>
    <property type="gene ID" value="ENSSSCG00030045646.1"/>
</dbReference>
<dbReference type="Ensembl" id="ENSSSCT00035100867.1">
    <property type="protein sequence ID" value="ENSSSCP00035042877.1"/>
    <property type="gene ID" value="ENSSSCG00035074291.1"/>
</dbReference>
<dbReference type="Ensembl" id="ENSSSCT00040093142.1">
    <property type="protein sequence ID" value="ENSSSCP00040041154.1"/>
    <property type="gene ID" value="ENSSSCG00040067989.1"/>
</dbReference>
<dbReference type="Ensembl" id="ENSSSCT00045050908.1">
    <property type="protein sequence ID" value="ENSSSCP00045035419.1"/>
    <property type="gene ID" value="ENSSSCG00045029732.1"/>
</dbReference>
<dbReference type="Ensembl" id="ENSSSCT00050063813.1">
    <property type="protein sequence ID" value="ENSSSCP00050027446.1"/>
    <property type="gene ID" value="ENSSSCG00050046864.1"/>
</dbReference>
<dbReference type="Ensembl" id="ENSSSCT00055006453.1">
    <property type="protein sequence ID" value="ENSSSCP00055005076.1"/>
    <property type="gene ID" value="ENSSSCG00055003291.1"/>
</dbReference>
<dbReference type="Ensembl" id="ENSSSCT00060042419.1">
    <property type="protein sequence ID" value="ENSSSCP00060018064.1"/>
    <property type="gene ID" value="ENSSSCG00060031333.1"/>
</dbReference>
<dbReference type="Ensembl" id="ENSSSCT00065035016.1">
    <property type="protein sequence ID" value="ENSSSCP00065014604.1"/>
    <property type="gene ID" value="ENSSSCG00065026077.1"/>
</dbReference>
<dbReference type="Ensembl" id="ENSSSCT00105059060">
    <property type="protein sequence ID" value="ENSSSCP00105041604"/>
    <property type="gene ID" value="ENSSSCG00105031135"/>
</dbReference>
<dbReference type="Ensembl" id="ENSSSCT00110022787">
    <property type="protein sequence ID" value="ENSSSCP00110015496"/>
    <property type="gene ID" value="ENSSSCG00110011823"/>
</dbReference>
<dbReference type="Ensembl" id="ENSSSCT00115039145">
    <property type="protein sequence ID" value="ENSSSCP00115036923"/>
    <property type="gene ID" value="ENSSSCG00115022094"/>
</dbReference>
<dbReference type="Ensembl" id="ENSSSCT00130037092">
    <property type="protein sequence ID" value="ENSSSCP00130025892"/>
    <property type="gene ID" value="ENSSSCG00130019164"/>
</dbReference>
<dbReference type="GeneID" id="100038002"/>
<dbReference type="KEGG" id="ssc:100038002"/>
<dbReference type="CTD" id="93974"/>
<dbReference type="VGNC" id="VGNC:85656">
    <property type="gene designation" value="ATP5IF1"/>
</dbReference>
<dbReference type="eggNOG" id="ENOG502S4JP">
    <property type="taxonomic scope" value="Eukaryota"/>
</dbReference>
<dbReference type="GeneTree" id="ENSGT00390000006264"/>
<dbReference type="HOGENOM" id="CLU_147479_0_0_1"/>
<dbReference type="InParanoid" id="Q29307"/>
<dbReference type="OMA" id="QEVDHHK"/>
<dbReference type="OrthoDB" id="10045676at2759"/>
<dbReference type="TreeFam" id="TF320659"/>
<dbReference type="Proteomes" id="UP000008227">
    <property type="component" value="Chromosome 6"/>
</dbReference>
<dbReference type="Proteomes" id="UP000314985">
    <property type="component" value="Unplaced"/>
</dbReference>
<dbReference type="Proteomes" id="UP000694570">
    <property type="component" value="Unplaced"/>
</dbReference>
<dbReference type="Proteomes" id="UP000694571">
    <property type="component" value="Unplaced"/>
</dbReference>
<dbReference type="Proteomes" id="UP000694720">
    <property type="component" value="Unplaced"/>
</dbReference>
<dbReference type="Proteomes" id="UP000694722">
    <property type="component" value="Unplaced"/>
</dbReference>
<dbReference type="Proteomes" id="UP000694723">
    <property type="component" value="Unplaced"/>
</dbReference>
<dbReference type="Proteomes" id="UP000694724">
    <property type="component" value="Unplaced"/>
</dbReference>
<dbReference type="Proteomes" id="UP000694725">
    <property type="component" value="Unplaced"/>
</dbReference>
<dbReference type="Proteomes" id="UP000694726">
    <property type="component" value="Unplaced"/>
</dbReference>
<dbReference type="Proteomes" id="UP000694727">
    <property type="component" value="Unplaced"/>
</dbReference>
<dbReference type="Proteomes" id="UP000694728">
    <property type="component" value="Unplaced"/>
</dbReference>
<dbReference type="Bgee" id="ENSSSCG00000027072">
    <property type="expression patterns" value="Expressed in blood and 47 other cell types or tissues"/>
</dbReference>
<dbReference type="ExpressionAtlas" id="Q29307">
    <property type="expression patterns" value="baseline and differential"/>
</dbReference>
<dbReference type="GO" id="GO:0009986">
    <property type="term" value="C:cell surface"/>
    <property type="evidence" value="ECO:0000250"/>
    <property type="project" value="UniProtKB"/>
</dbReference>
<dbReference type="GO" id="GO:0005737">
    <property type="term" value="C:cytoplasm"/>
    <property type="evidence" value="ECO:0000318"/>
    <property type="project" value="GO_Central"/>
</dbReference>
<dbReference type="GO" id="GO:0005739">
    <property type="term" value="C:mitochondrion"/>
    <property type="evidence" value="ECO:0000250"/>
    <property type="project" value="UniProtKB"/>
</dbReference>
<dbReference type="GO" id="GO:0032991">
    <property type="term" value="C:protein-containing complex"/>
    <property type="evidence" value="ECO:0000250"/>
    <property type="project" value="UniProtKB"/>
</dbReference>
<dbReference type="GO" id="GO:0043532">
    <property type="term" value="F:angiostatin binding"/>
    <property type="evidence" value="ECO:0000250"/>
    <property type="project" value="UniProtKB"/>
</dbReference>
<dbReference type="GO" id="GO:0051117">
    <property type="term" value="F:ATPase binding"/>
    <property type="evidence" value="ECO:0000250"/>
    <property type="project" value="UniProtKB"/>
</dbReference>
<dbReference type="GO" id="GO:0042030">
    <property type="term" value="F:ATPase inhibitor activity"/>
    <property type="evidence" value="ECO:0000250"/>
    <property type="project" value="UniProtKB"/>
</dbReference>
<dbReference type="GO" id="GO:0005516">
    <property type="term" value="F:calmodulin binding"/>
    <property type="evidence" value="ECO:0000250"/>
    <property type="project" value="UniProtKB"/>
</dbReference>
<dbReference type="GO" id="GO:0042802">
    <property type="term" value="F:identical protein binding"/>
    <property type="evidence" value="ECO:0000250"/>
    <property type="project" value="UniProtKB"/>
</dbReference>
<dbReference type="GO" id="GO:0140260">
    <property type="term" value="F:mitochondrial proton-transporting ATP synthase complex binding"/>
    <property type="evidence" value="ECO:0007669"/>
    <property type="project" value="Ensembl"/>
</dbReference>
<dbReference type="GO" id="GO:0030218">
    <property type="term" value="P:erythrocyte differentiation"/>
    <property type="evidence" value="ECO:0000250"/>
    <property type="project" value="UniProtKB"/>
</dbReference>
<dbReference type="GO" id="GO:0006783">
    <property type="term" value="P:heme biosynthetic process"/>
    <property type="evidence" value="ECO:0000250"/>
    <property type="project" value="UniProtKB"/>
</dbReference>
<dbReference type="GO" id="GO:0051882">
    <property type="term" value="P:mitochondrial depolarization"/>
    <property type="evidence" value="ECO:0007669"/>
    <property type="project" value="Ensembl"/>
</dbReference>
<dbReference type="GO" id="GO:0001937">
    <property type="term" value="P:negative regulation of endothelial cell proliferation"/>
    <property type="evidence" value="ECO:0000250"/>
    <property type="project" value="UniProtKB"/>
</dbReference>
<dbReference type="GO" id="GO:0051346">
    <property type="term" value="P:negative regulation of hydrolase activity"/>
    <property type="evidence" value="ECO:0000250"/>
    <property type="project" value="UniProtKB"/>
</dbReference>
<dbReference type="GO" id="GO:1905707">
    <property type="term" value="P:negative regulation of mitochondrial ATP synthesis coupled proton transport"/>
    <property type="evidence" value="ECO:0000250"/>
    <property type="project" value="UniProtKB"/>
</dbReference>
<dbReference type="GO" id="GO:1901030">
    <property type="term" value="P:positive regulation of mitochondrial outer membrane permeabilization involved in apoptotic signaling pathway"/>
    <property type="evidence" value="ECO:0007669"/>
    <property type="project" value="Ensembl"/>
</dbReference>
<dbReference type="GO" id="GO:1903052">
    <property type="term" value="P:positive regulation of proteolysis involved in protein catabolic process"/>
    <property type="evidence" value="ECO:0007669"/>
    <property type="project" value="Ensembl"/>
</dbReference>
<dbReference type="GO" id="GO:1905091">
    <property type="term" value="P:positive regulation of type 2 mitophagy"/>
    <property type="evidence" value="ECO:0007669"/>
    <property type="project" value="Ensembl"/>
</dbReference>
<dbReference type="GO" id="GO:0072593">
    <property type="term" value="P:reactive oxygen species metabolic process"/>
    <property type="evidence" value="ECO:0007669"/>
    <property type="project" value="Ensembl"/>
</dbReference>
<dbReference type="GO" id="GO:1903214">
    <property type="term" value="P:regulation of protein targeting to mitochondrion"/>
    <property type="evidence" value="ECO:0007669"/>
    <property type="project" value="Ensembl"/>
</dbReference>
<dbReference type="FunFam" id="1.20.5.500:FF:000004">
    <property type="entry name" value="ATPase inhibitor A, mitochondrial"/>
    <property type="match status" value="1"/>
</dbReference>
<dbReference type="FunFam" id="1.20.5.500:FF:000003">
    <property type="entry name" value="ATPase inhibitor B, mitochondrial"/>
    <property type="match status" value="1"/>
</dbReference>
<dbReference type="Gene3D" id="1.20.5.500">
    <property type="entry name" value="Single helix bin"/>
    <property type="match status" value="2"/>
</dbReference>
<dbReference type="InterPro" id="IPR007648">
    <property type="entry name" value="ATPase_inhibitor_mt"/>
</dbReference>
<dbReference type="PANTHER" id="PTHR48417">
    <property type="entry name" value="ATP SYNTHASE F1 SUBUNIT EPSILON"/>
    <property type="match status" value="1"/>
</dbReference>
<dbReference type="PANTHER" id="PTHR48417:SF1">
    <property type="entry name" value="ATP SYNTHASE F1 SUBUNIT EPSILON"/>
    <property type="match status" value="1"/>
</dbReference>
<dbReference type="Pfam" id="PF04568">
    <property type="entry name" value="IATP"/>
    <property type="match status" value="1"/>
</dbReference>
<dbReference type="SUPFAM" id="SSF64602">
    <property type="entry name" value="F1 ATPase inhibitor, IF1, C-terminal domain"/>
    <property type="match status" value="1"/>
</dbReference>
<reference key="1">
    <citation type="journal article" date="1996" name="Mamm. Genome">
        <title>Evaluation and characterization of a porcine small intestine cDNA library: analysis of 839 clones.</title>
        <authorList>
            <person name="Winteroe A.K."/>
            <person name="Fredholm M."/>
            <person name="Davies W."/>
        </authorList>
    </citation>
    <scope>NUCLEOTIDE SEQUENCE [LARGE SCALE MRNA]</scope>
    <source>
        <tissue>Small intestine</tissue>
    </source>
</reference>
<reference key="2">
    <citation type="submission" date="2006-05" db="EMBL/GenBank/DDBJ databases">
        <title>Generation and analysis of cDNA sequences derived from a porcine skeletal muscle library.</title>
        <authorList>
            <person name="Cai G."/>
            <person name="Chen Y."/>
            <person name="Wang C."/>
            <person name="Li J."/>
            <person name="Peng G."/>
            <person name="Zhang H."/>
        </authorList>
    </citation>
    <scope>NUCLEOTIDE SEQUENCE [LARGE SCALE MRNA]</scope>
    <source>
        <tissue>Longissimus dorsi muscle</tissue>
    </source>
</reference>
<protein>
    <recommendedName>
        <fullName evidence="7">ATPase inhibitor, mitochondrial</fullName>
    </recommendedName>
    <alternativeName>
        <fullName evidence="4">ATP synthase F1 subunit epsilon</fullName>
    </alternativeName>
    <alternativeName>
        <fullName>Inhibitor of F(1)F(o)-ATPase</fullName>
        <shortName>IF(1)</shortName>
        <shortName>IF1</shortName>
    </alternativeName>
</protein>
<evidence type="ECO:0000250" key="1"/>
<evidence type="ECO:0000250" key="2">
    <source>
        <dbReference type="UniProtKB" id="O35143"/>
    </source>
</evidence>
<evidence type="ECO:0000250" key="3">
    <source>
        <dbReference type="UniProtKB" id="P01096"/>
    </source>
</evidence>
<evidence type="ECO:0000250" key="4">
    <source>
        <dbReference type="UniProtKB" id="Q9UII2"/>
    </source>
</evidence>
<evidence type="ECO:0000255" key="5"/>
<evidence type="ECO:0000256" key="6">
    <source>
        <dbReference type="SAM" id="MobiDB-lite"/>
    </source>
</evidence>
<evidence type="ECO:0000305" key="7"/>
<evidence type="ECO:0007829" key="8">
    <source>
        <dbReference type="PDB" id="6J5I"/>
    </source>
</evidence>
<proteinExistence type="evidence at protein level"/>
<organism>
    <name type="scientific">Sus scrofa</name>
    <name type="common">Pig</name>
    <dbReference type="NCBI Taxonomy" id="9823"/>
    <lineage>
        <taxon>Eukaryota</taxon>
        <taxon>Metazoa</taxon>
        <taxon>Chordata</taxon>
        <taxon>Craniata</taxon>
        <taxon>Vertebrata</taxon>
        <taxon>Euteleostomi</taxon>
        <taxon>Mammalia</taxon>
        <taxon>Eutheria</taxon>
        <taxon>Laurasiatheria</taxon>
        <taxon>Artiodactyla</taxon>
        <taxon>Suina</taxon>
        <taxon>Suidae</taxon>
        <taxon>Sus</taxon>
    </lineage>
</organism>
<feature type="transit peptide" description="Mitochondrion" evidence="1">
    <location>
        <begin position="1"/>
        <end position="25"/>
    </location>
</feature>
<feature type="chain" id="PRO_0000002549" description="ATPase inhibitor, mitochondrial">
    <location>
        <begin position="26"/>
        <end position="108"/>
    </location>
</feature>
<feature type="region of interest" description="Disordered" evidence="6">
    <location>
        <begin position="25"/>
        <end position="48"/>
    </location>
</feature>
<feature type="region of interest" description="N-terminal inhibitory region" evidence="1">
    <location>
        <begin position="26"/>
        <end position="52"/>
    </location>
</feature>
<feature type="region of interest" description="Antiparallel alpha-helical coiled coil region" evidence="1">
    <location>
        <begin position="74"/>
        <end position="106"/>
    </location>
</feature>
<feature type="coiled-coil region" evidence="5">
    <location>
        <begin position="69"/>
        <end position="108"/>
    </location>
</feature>
<feature type="modified residue" description="N6-succinyllysine" evidence="2">
    <location>
        <position position="103"/>
    </location>
</feature>
<feature type="strand" evidence="8">
    <location>
        <begin position="28"/>
        <end position="32"/>
    </location>
</feature>
<feature type="helix" evidence="8">
    <location>
        <begin position="40"/>
        <end position="43"/>
    </location>
</feature>
<feature type="strand" evidence="8">
    <location>
        <begin position="45"/>
        <end position="48"/>
    </location>
</feature>
<feature type="helix" evidence="8">
    <location>
        <begin position="49"/>
        <end position="52"/>
    </location>
</feature>
<feature type="turn" evidence="8">
    <location>
        <begin position="53"/>
        <end position="64"/>
    </location>
</feature>
<feature type="helix" evidence="8">
    <location>
        <begin position="65"/>
        <end position="79"/>
    </location>
</feature>